<accession>Q71UN4</accession>
<keyword id="KW-1015">Disulfide bond</keyword>
<keyword id="KW-0391">Immunity</keyword>
<keyword id="KW-0393">Immunoglobulin domain</keyword>
<keyword id="KW-0490">MHC I</keyword>
<keyword id="KW-0964">Secreted</keyword>
<keyword id="KW-0732">Signal</keyword>
<reference key="1">
    <citation type="journal article" date="1999" name="Mol. Phylogenet. Evol.">
        <title>Molecular phylogeny of new world primates (Platyrrhini) based on beta2-microglobulin DNA sequences.</title>
        <authorList>
            <person name="Canavez F.C."/>
            <person name="Moreira M.A."/>
            <person name="Ladasky J.J."/>
            <person name="Pissinatti A."/>
            <person name="Parham P."/>
            <person name="Seuanez H.N."/>
        </authorList>
    </citation>
    <scope>NUCLEOTIDE SEQUENCE [GENOMIC DNA]</scope>
</reference>
<gene>
    <name type="primary">B2M</name>
</gene>
<name>B2MG_MICHU</name>
<organism>
    <name type="scientific">Mico humeralifer</name>
    <name type="common">Black and white tassel-ear marmoset</name>
    <name type="synonym">Callithrix humeralifera</name>
    <dbReference type="NCBI Taxonomy" id="52232"/>
    <lineage>
        <taxon>Eukaryota</taxon>
        <taxon>Metazoa</taxon>
        <taxon>Chordata</taxon>
        <taxon>Craniata</taxon>
        <taxon>Vertebrata</taxon>
        <taxon>Euteleostomi</taxon>
        <taxon>Mammalia</taxon>
        <taxon>Eutheria</taxon>
        <taxon>Euarchontoglires</taxon>
        <taxon>Primates</taxon>
        <taxon>Haplorrhini</taxon>
        <taxon>Platyrrhini</taxon>
        <taxon>Cebidae</taxon>
        <taxon>Callitrichinae</taxon>
        <taxon>Mico</taxon>
    </lineage>
</organism>
<protein>
    <recommendedName>
        <fullName>Beta-2-microglobulin</fullName>
    </recommendedName>
</protein>
<sequence length="119" mass="13567">MACSVVVALLALLSLSGLEAIQHAPKIQVYSRHPAENGKPNFLNCYVSGFHPSDIEVDLLKNGKKIEKVEHSDLSFSKDWSFYLLYYTEFTPNEKDEYACRVSHVTFSTPKTVKWDRNI</sequence>
<proteinExistence type="inferred from homology"/>
<feature type="signal peptide" evidence="1">
    <location>
        <begin position="1"/>
        <end position="20"/>
    </location>
</feature>
<feature type="chain" id="PRO_0000018763" description="Beta-2-microglobulin">
    <location>
        <begin position="21"/>
        <end position="119"/>
    </location>
</feature>
<feature type="domain" description="Ig-like C1-type">
    <location>
        <begin position="25"/>
        <end position="114"/>
    </location>
</feature>
<feature type="disulfide bond" evidence="2">
    <location>
        <begin position="45"/>
        <end position="100"/>
    </location>
</feature>
<evidence type="ECO:0000250" key="1"/>
<evidence type="ECO:0000255" key="2">
    <source>
        <dbReference type="PROSITE-ProRule" id="PRU00114"/>
    </source>
</evidence>
<evidence type="ECO:0000305" key="3"/>
<dbReference type="EMBL" id="AF068769">
    <property type="protein sequence ID" value="AAD17567.1"/>
    <property type="molecule type" value="Genomic_DNA"/>
</dbReference>
<dbReference type="EMBL" id="AF068768">
    <property type="protein sequence ID" value="AAD17567.1"/>
    <property type="status" value="JOINED"/>
    <property type="molecule type" value="Genomic_DNA"/>
</dbReference>
<dbReference type="SMR" id="Q71UN4"/>
<dbReference type="GO" id="GO:0005576">
    <property type="term" value="C:extracellular region"/>
    <property type="evidence" value="ECO:0007669"/>
    <property type="project" value="UniProtKB-SubCell"/>
</dbReference>
<dbReference type="GO" id="GO:0042612">
    <property type="term" value="C:MHC class I protein complex"/>
    <property type="evidence" value="ECO:0007669"/>
    <property type="project" value="UniProtKB-KW"/>
</dbReference>
<dbReference type="GO" id="GO:0002474">
    <property type="term" value="P:antigen processing and presentation of peptide antigen via MHC class I"/>
    <property type="evidence" value="ECO:0007669"/>
    <property type="project" value="UniProtKB-KW"/>
</dbReference>
<dbReference type="GO" id="GO:0006955">
    <property type="term" value="P:immune response"/>
    <property type="evidence" value="ECO:0007669"/>
    <property type="project" value="InterPro"/>
</dbReference>
<dbReference type="CDD" id="cd05770">
    <property type="entry name" value="IgC1_beta2m"/>
    <property type="match status" value="1"/>
</dbReference>
<dbReference type="FunFam" id="2.60.40.10:FF:001005">
    <property type="entry name" value="Beta-2-microglobulin"/>
    <property type="match status" value="1"/>
</dbReference>
<dbReference type="Gene3D" id="2.60.40.10">
    <property type="entry name" value="Immunoglobulins"/>
    <property type="match status" value="1"/>
</dbReference>
<dbReference type="InterPro" id="IPR015707">
    <property type="entry name" value="B2Microglobulin"/>
</dbReference>
<dbReference type="InterPro" id="IPR007110">
    <property type="entry name" value="Ig-like_dom"/>
</dbReference>
<dbReference type="InterPro" id="IPR036179">
    <property type="entry name" value="Ig-like_dom_sf"/>
</dbReference>
<dbReference type="InterPro" id="IPR013783">
    <property type="entry name" value="Ig-like_fold"/>
</dbReference>
<dbReference type="InterPro" id="IPR003006">
    <property type="entry name" value="Ig/MHC_CS"/>
</dbReference>
<dbReference type="InterPro" id="IPR003597">
    <property type="entry name" value="Ig_C1-set"/>
</dbReference>
<dbReference type="InterPro" id="IPR050160">
    <property type="entry name" value="MHC/Immunoglobulin"/>
</dbReference>
<dbReference type="PANTHER" id="PTHR19944:SF62">
    <property type="entry name" value="BETA-2-MICROGLOBULIN"/>
    <property type="match status" value="1"/>
</dbReference>
<dbReference type="PANTHER" id="PTHR19944">
    <property type="entry name" value="MHC CLASS II-RELATED"/>
    <property type="match status" value="1"/>
</dbReference>
<dbReference type="Pfam" id="PF07654">
    <property type="entry name" value="C1-set"/>
    <property type="match status" value="1"/>
</dbReference>
<dbReference type="SMART" id="SM00407">
    <property type="entry name" value="IGc1"/>
    <property type="match status" value="1"/>
</dbReference>
<dbReference type="SUPFAM" id="SSF48726">
    <property type="entry name" value="Immunoglobulin"/>
    <property type="match status" value="1"/>
</dbReference>
<dbReference type="PROSITE" id="PS50835">
    <property type="entry name" value="IG_LIKE"/>
    <property type="match status" value="1"/>
</dbReference>
<dbReference type="PROSITE" id="PS00290">
    <property type="entry name" value="IG_MHC"/>
    <property type="match status" value="1"/>
</dbReference>
<comment type="function">
    <text evidence="1">Component of the class I major histocompatibility complex (MHC). Involved in the presentation of peptide antigens to the immune system (By similarity).</text>
</comment>
<comment type="subunit">
    <text evidence="1">Heterodimer of an alpha chain and a beta chain. Beta-2-microglobulin is the beta-chain of major histocompatibility complex class I molecules (By similarity).</text>
</comment>
<comment type="subcellular location">
    <subcellularLocation>
        <location evidence="1">Secreted</location>
    </subcellularLocation>
</comment>
<comment type="similarity">
    <text evidence="3">Belongs to the beta-2-microglobulin family.</text>
</comment>